<feature type="transit peptide" description="Mitochondrion" evidence="3">
    <location>
        <begin position="1"/>
        <end position="8"/>
    </location>
</feature>
<feature type="chain" id="PRO_0000194727" description="Succinyl-CoA:glutarate CoA-transferase">
    <location>
        <begin position="9"/>
        <end position="436"/>
    </location>
</feature>
<feature type="active site" description="Nucleophile" evidence="1">
    <location>
        <position position="203"/>
    </location>
</feature>
<feature type="modified residue" description="N6-acetyllysine" evidence="8">
    <location>
        <position position="392"/>
    </location>
</feature>
<feature type="modified residue" description="N6-acetyllysine" evidence="8">
    <location>
        <position position="423"/>
    </location>
</feature>
<feature type="sequence conflict" description="In Ref. 1; AAH55852." evidence="6" ref="1">
    <original>C</original>
    <variation>S</variation>
    <location>
        <position position="305"/>
    </location>
</feature>
<reference key="1">
    <citation type="journal article" date="2009" name="PLoS Biol.">
        <title>Lineage-specific biology revealed by a finished genome assembly of the mouse.</title>
        <authorList>
            <person name="Church D.M."/>
            <person name="Goodstadt L."/>
            <person name="Hillier L.W."/>
            <person name="Zody M.C."/>
            <person name="Goldstein S."/>
            <person name="She X."/>
            <person name="Bult C.J."/>
            <person name="Agarwala R."/>
            <person name="Cherry J.L."/>
            <person name="DiCuccio M."/>
            <person name="Hlavina W."/>
            <person name="Kapustin Y."/>
            <person name="Meric P."/>
            <person name="Maglott D."/>
            <person name="Birtle Z."/>
            <person name="Marques A.C."/>
            <person name="Graves T."/>
            <person name="Zhou S."/>
            <person name="Teague B."/>
            <person name="Potamousis K."/>
            <person name="Churas C."/>
            <person name="Place M."/>
            <person name="Herschleb J."/>
            <person name="Runnheim R."/>
            <person name="Forrest D."/>
            <person name="Amos-Landgraf J."/>
            <person name="Schwartz D.C."/>
            <person name="Cheng Z."/>
            <person name="Lindblad-Toh K."/>
            <person name="Eichler E.E."/>
            <person name="Ponting C.P."/>
        </authorList>
    </citation>
    <scope>NUCLEOTIDE SEQUENCE [LARGE SCALE GENOMIC DNA]</scope>
    <source>
        <strain>C57BL/6J</strain>
    </source>
</reference>
<reference key="2">
    <citation type="submission" date="2005-07" db="EMBL/GenBank/DDBJ databases">
        <authorList>
            <person name="Mural R.J."/>
            <person name="Adams M.D."/>
            <person name="Myers E.W."/>
            <person name="Smith H.O."/>
            <person name="Venter J.C."/>
        </authorList>
    </citation>
    <scope>NUCLEOTIDE SEQUENCE [LARGE SCALE GENOMIC DNA]</scope>
</reference>
<reference key="3">
    <citation type="journal article" date="2004" name="Genome Res.">
        <title>The status, quality, and expansion of the NIH full-length cDNA project: the Mammalian Gene Collection (MGC).</title>
        <authorList>
            <consortium name="The MGC Project Team"/>
        </authorList>
    </citation>
    <scope>NUCLEOTIDE SEQUENCE [LARGE SCALE MRNA]</scope>
    <source>
        <strain>FVB/N</strain>
        <tissue>Kidney</tissue>
    </source>
</reference>
<reference key="4">
    <citation type="journal article" date="2010" name="Cell">
        <title>A tissue-specific atlas of mouse protein phosphorylation and expression.</title>
        <authorList>
            <person name="Huttlin E.L."/>
            <person name="Jedrychowski M.P."/>
            <person name="Elias J.E."/>
            <person name="Goswami T."/>
            <person name="Rad R."/>
            <person name="Beausoleil S.A."/>
            <person name="Villen J."/>
            <person name="Haas W."/>
            <person name="Sowa M.E."/>
            <person name="Gygi S.P."/>
        </authorList>
    </citation>
    <scope>IDENTIFICATION BY MASS SPECTROMETRY [LARGE SCALE ANALYSIS]</scope>
    <source>
        <tissue>Kidney</tissue>
    </source>
</reference>
<reference key="5">
    <citation type="journal article" date="2013" name="Proc. Natl. Acad. Sci. U.S.A.">
        <title>Label-free quantitative proteomics of the lysine acetylome in mitochondria identifies substrates of SIRT3 in metabolic pathways.</title>
        <authorList>
            <person name="Rardin M.J."/>
            <person name="Newman J.C."/>
            <person name="Held J.M."/>
            <person name="Cusack M.P."/>
            <person name="Sorensen D.J."/>
            <person name="Li B."/>
            <person name="Schilling B."/>
            <person name="Mooney S.D."/>
            <person name="Kahn C.R."/>
            <person name="Verdin E."/>
            <person name="Gibson B.W."/>
        </authorList>
    </citation>
    <scope>ACETYLATION [LARGE SCALE ANALYSIS] AT LYS-392 AND LYS-423</scope>
    <scope>IDENTIFICATION BY MASS SPECTROMETRY [LARGE SCALE ANALYSIS]</scope>
    <source>
        <tissue>Liver</tissue>
    </source>
</reference>
<reference key="6">
    <citation type="journal article" date="2020" name="Cell. Mol. Life Sci.">
        <title>Knockout of the non-essential gene SUGCT creates diet-linked, age-related microbiome disbalance with a diabetes-like metabolic syndrome phenotype.</title>
        <authorList>
            <person name="Niska-Blakie J."/>
            <person name="Gopinathan L."/>
            <person name="Low K.N."/>
            <person name="Kien Y.L."/>
            <person name="Goh C.M.F."/>
            <person name="Caldez M.J."/>
            <person name="Pfeiffenberger E."/>
            <person name="Jones O.S."/>
            <person name="Ong C.B."/>
            <person name="Kurochkin I.V."/>
            <person name="Coppola V."/>
            <person name="Tessarollo L."/>
            <person name="Choi H."/>
            <person name="Kanagasundaram Y."/>
            <person name="Eisenhaber F."/>
            <person name="Maurer-Stroh S."/>
            <person name="Kaldis P."/>
        </authorList>
    </citation>
    <scope>DISRUPTION PHENOTYPE</scope>
</reference>
<name>SUCHY_MOUSE</name>
<organism>
    <name type="scientific">Mus musculus</name>
    <name type="common">Mouse</name>
    <dbReference type="NCBI Taxonomy" id="10090"/>
    <lineage>
        <taxon>Eukaryota</taxon>
        <taxon>Metazoa</taxon>
        <taxon>Chordata</taxon>
        <taxon>Craniata</taxon>
        <taxon>Vertebrata</taxon>
        <taxon>Euteleostomi</taxon>
        <taxon>Mammalia</taxon>
        <taxon>Eutheria</taxon>
        <taxon>Euarchontoglires</taxon>
        <taxon>Glires</taxon>
        <taxon>Rodentia</taxon>
        <taxon>Myomorpha</taxon>
        <taxon>Muroidea</taxon>
        <taxon>Muridae</taxon>
        <taxon>Murinae</taxon>
        <taxon>Mus</taxon>
        <taxon>Mus</taxon>
    </lineage>
</organism>
<protein>
    <recommendedName>
        <fullName evidence="2">Succinyl-CoA:glutarate CoA-transferase</fullName>
        <ecNumber evidence="2">2.8.3.-</ecNumber>
    </recommendedName>
    <alternativeName>
        <fullName evidence="2">Dicarboxyl-CoA:dicarboxylic acid coenzyme A transferase SUGCT</fullName>
    </alternativeName>
    <alternativeName>
        <fullName evidence="2">Succinate--hydroxymethylglutarate CoA-transferase</fullName>
        <ecNumber evidence="2">2.8.3.13</ecNumber>
    </alternativeName>
</protein>
<gene>
    <name evidence="5 7" type="primary">Sugct</name>
</gene>
<proteinExistence type="evidence at protein level"/>
<keyword id="KW-0007">Acetylation</keyword>
<keyword id="KW-0496">Mitochondrion</keyword>
<keyword id="KW-1185">Reference proteome</keyword>
<keyword id="KW-0808">Transferase</keyword>
<keyword id="KW-0809">Transit peptide</keyword>
<comment type="function">
    <text evidence="2">Coenzyme A (CoA) transferase that reversibly catalyzes the transfer of a CoA moiety from a dicarboxyl-CoA to a dicarboxylate in a metabolite recycling process. Displays preference for succinyl-CoA and glutarate-CoA as dicarboxyl-CoA donors and glutarate, succinate, adipate/hexanedioate, itaconate and 3-hydroxy-3-methylglutarate as dicarboxylate acceptors (By similarity). Acts on intermediates or end products of lysine and tryptophan degradation pathway, in particular catalyzes succinyl-CoA-dependent reesterification of free glutarate into glutaryl-CoA to prevent renal excretion of glutarate (By similarity). Upon inflammation, may convert macrophage-derived itaconate to itaconyl-CoA in erythroid precursors where it negatively regulates the TCA cycle and heme synthesis to limit erythroid differentiation in the context of stress erythropoiesis (By similarity).</text>
</comment>
<comment type="catalytic activity">
    <reaction evidence="2">
        <text>glutarate + succinyl-CoA = glutaryl-CoA + succinate</text>
        <dbReference type="Rhea" id="RHEA:67900"/>
        <dbReference type="ChEBI" id="CHEBI:30031"/>
        <dbReference type="ChEBI" id="CHEBI:30921"/>
        <dbReference type="ChEBI" id="CHEBI:57292"/>
        <dbReference type="ChEBI" id="CHEBI:57378"/>
    </reaction>
    <physiologicalReaction direction="left-to-right" evidence="2">
        <dbReference type="Rhea" id="RHEA:67901"/>
    </physiologicalReaction>
    <physiologicalReaction direction="right-to-left" evidence="2">
        <dbReference type="Rhea" id="RHEA:67902"/>
    </physiologicalReaction>
</comment>
<comment type="catalytic activity">
    <reaction evidence="2">
        <text>3-hydroxy-3-methylglutarate + succinyl-CoA = (3S)-3-hydroxy-3-methylglutaryl-CoA + succinate</text>
        <dbReference type="Rhea" id="RHEA:12284"/>
        <dbReference type="ChEBI" id="CHEBI:17325"/>
        <dbReference type="ChEBI" id="CHEBI:30031"/>
        <dbReference type="ChEBI" id="CHEBI:43074"/>
        <dbReference type="ChEBI" id="CHEBI:57292"/>
        <dbReference type="EC" id="2.8.3.13"/>
    </reaction>
    <physiologicalReaction direction="left-to-right" evidence="2">
        <dbReference type="Rhea" id="RHEA:12285"/>
    </physiologicalReaction>
    <physiologicalReaction direction="right-to-left" evidence="2">
        <dbReference type="Rhea" id="RHEA:12286"/>
    </physiologicalReaction>
</comment>
<comment type="catalytic activity">
    <reaction evidence="2">
        <text>3-hydroxy-3-methylglutarate + glutaryl-CoA = (3S)-3-hydroxy-3-methylglutaryl-CoA + glutarate</text>
        <dbReference type="Rhea" id="RHEA:81723"/>
        <dbReference type="ChEBI" id="CHEBI:17325"/>
        <dbReference type="ChEBI" id="CHEBI:30921"/>
        <dbReference type="ChEBI" id="CHEBI:43074"/>
        <dbReference type="ChEBI" id="CHEBI:57378"/>
    </reaction>
    <physiologicalReaction direction="left-to-right" evidence="2">
        <dbReference type="Rhea" id="RHEA:81724"/>
    </physiologicalReaction>
    <physiologicalReaction direction="right-to-left" evidence="2">
        <dbReference type="Rhea" id="RHEA:81725"/>
    </physiologicalReaction>
</comment>
<comment type="catalytic activity">
    <reaction evidence="2">
        <text>hexanedioate + glutaryl-CoA = hexanedioyl-CoA + glutarate</text>
        <dbReference type="Rhea" id="RHEA:81711"/>
        <dbReference type="ChEBI" id="CHEBI:17128"/>
        <dbReference type="ChEBI" id="CHEBI:30921"/>
        <dbReference type="ChEBI" id="CHEBI:57378"/>
        <dbReference type="ChEBI" id="CHEBI:76327"/>
    </reaction>
    <physiologicalReaction direction="left-to-right" evidence="2">
        <dbReference type="Rhea" id="RHEA:81712"/>
    </physiologicalReaction>
    <physiologicalReaction direction="right-to-left" evidence="2">
        <dbReference type="Rhea" id="RHEA:81713"/>
    </physiologicalReaction>
</comment>
<comment type="catalytic activity">
    <reaction evidence="2">
        <text>itaconate + glutaryl-CoA = itaconyl-CoA + glutarate</text>
        <dbReference type="Rhea" id="RHEA:81715"/>
        <dbReference type="ChEBI" id="CHEBI:17240"/>
        <dbReference type="ChEBI" id="CHEBI:30921"/>
        <dbReference type="ChEBI" id="CHEBI:57378"/>
        <dbReference type="ChEBI" id="CHEBI:57381"/>
    </reaction>
    <physiologicalReaction direction="left-to-right" evidence="2">
        <dbReference type="Rhea" id="RHEA:81716"/>
    </physiologicalReaction>
    <physiologicalReaction direction="right-to-left" evidence="2">
        <dbReference type="Rhea" id="RHEA:81717"/>
    </physiologicalReaction>
</comment>
<comment type="catalytic activity">
    <reaction evidence="2">
        <text>itaconate + succinyl-CoA = itaconyl-CoA + succinate</text>
        <dbReference type="Rhea" id="RHEA:38283"/>
        <dbReference type="ChEBI" id="CHEBI:17240"/>
        <dbReference type="ChEBI" id="CHEBI:30031"/>
        <dbReference type="ChEBI" id="CHEBI:57292"/>
        <dbReference type="ChEBI" id="CHEBI:57381"/>
    </reaction>
    <physiologicalReaction direction="left-to-right" evidence="2">
        <dbReference type="Rhea" id="RHEA:38284"/>
    </physiologicalReaction>
    <physiologicalReaction direction="right-to-left" evidence="2">
        <dbReference type="Rhea" id="RHEA:38285"/>
    </physiologicalReaction>
</comment>
<comment type="subcellular location">
    <subcellularLocation>
        <location evidence="2">Mitochondrion</location>
    </subcellularLocation>
</comment>
<comment type="disruption phenotype">
    <text evidence="4">Mice are born at the expected Mendelian ratio. They display increased glutarate and adipate renal levels associated with dysbiosis and obesity with aging. High lysine diet accelerates these pathological metabolic changes, whereas the depletion of the gut microbiota via antibiotic treatment eliminates them.</text>
</comment>
<comment type="similarity">
    <text evidence="6">Belongs to the CoA-transferase III family.</text>
</comment>
<sequence length="436" mass="47690">MLWMLARAVAFRRPGRGLAGGRGLWTGRPQSDCDSMKPLEGVRILDLTRVLAGPFATMNLGDLGAEVIKVERPGAGDDTRSWGPPFVNTESTYFLSVNRNKKSIAVNIKDPRGVRIVKELAAICDVFVENYVPGKLSEMGLGYEDIDKIAPHIIYCSITGYGQTGPMSHRAGYDAIASAMSGLMHITGPEDGDPVRPGVAMTDLATGLFAYGAIMAGLLQRYRTGKGLFIDCNLLSSQVACLTQVAANYLIGQKEAKRWGTAHGSIVPYQAFKTKDGYLVIGAGNNQQFAVVCKILNLPELIDDCKYRTNHLRVQNRKELVKILSARFAEEVTAKWLCLFEGSGIPYGPINSLKDVFSEAQVLHNGLVMEMNHPTVGKISVPGPAVRYSKFKMSEAKPPPLLGQHTRHILKEVLRYDEGAIEKLLCSGVIEQHETK</sequence>
<evidence type="ECO:0000250" key="1"/>
<evidence type="ECO:0000250" key="2">
    <source>
        <dbReference type="UniProtKB" id="Q9HAC7"/>
    </source>
</evidence>
<evidence type="ECO:0000255" key="3"/>
<evidence type="ECO:0000269" key="4">
    <source>
    </source>
</evidence>
<evidence type="ECO:0000303" key="5">
    <source>
    </source>
</evidence>
<evidence type="ECO:0000305" key="6"/>
<evidence type="ECO:0000312" key="7">
    <source>
        <dbReference type="MGI" id="MGI:1923221"/>
    </source>
</evidence>
<evidence type="ECO:0007744" key="8">
    <source>
    </source>
</evidence>
<dbReference type="EC" id="2.8.3.-" evidence="2"/>
<dbReference type="EC" id="2.8.3.13" evidence="2"/>
<dbReference type="EMBL" id="AC154219">
    <property type="status" value="NOT_ANNOTATED_CDS"/>
    <property type="molecule type" value="Genomic_DNA"/>
</dbReference>
<dbReference type="EMBL" id="AC154317">
    <property type="status" value="NOT_ANNOTATED_CDS"/>
    <property type="molecule type" value="Genomic_DNA"/>
</dbReference>
<dbReference type="EMBL" id="AC154368">
    <property type="status" value="NOT_ANNOTATED_CDS"/>
    <property type="molecule type" value="Genomic_DNA"/>
</dbReference>
<dbReference type="EMBL" id="AC154386">
    <property type="status" value="NOT_ANNOTATED_CDS"/>
    <property type="molecule type" value="Genomic_DNA"/>
</dbReference>
<dbReference type="EMBL" id="AC154662">
    <property type="status" value="NOT_ANNOTATED_CDS"/>
    <property type="molecule type" value="Genomic_DNA"/>
</dbReference>
<dbReference type="EMBL" id="AC156459">
    <property type="status" value="NOT_ANNOTATED_CDS"/>
    <property type="molecule type" value="Genomic_DNA"/>
</dbReference>
<dbReference type="EMBL" id="AC156569">
    <property type="status" value="NOT_ANNOTATED_CDS"/>
    <property type="molecule type" value="Genomic_DNA"/>
</dbReference>
<dbReference type="EMBL" id="CT030714">
    <property type="status" value="NOT_ANNOTATED_CDS"/>
    <property type="molecule type" value="Genomic_DNA"/>
</dbReference>
<dbReference type="EMBL" id="CH466561">
    <property type="protein sequence ID" value="EDL32726.1"/>
    <property type="molecule type" value="Genomic_DNA"/>
</dbReference>
<dbReference type="EMBL" id="BC055852">
    <property type="protein sequence ID" value="AAH55852.1"/>
    <property type="molecule type" value="mRNA"/>
</dbReference>
<dbReference type="CCDS" id="CCDS26252.1"/>
<dbReference type="RefSeq" id="NP_619595.3">
    <property type="nucleotide sequence ID" value="NM_138654.3"/>
</dbReference>
<dbReference type="SMR" id="Q7TNE1"/>
<dbReference type="BioGRID" id="228644">
    <property type="interactions" value="1"/>
</dbReference>
<dbReference type="FunCoup" id="Q7TNE1">
    <property type="interactions" value="484"/>
</dbReference>
<dbReference type="STRING" id="10090.ENSMUSP00000070759"/>
<dbReference type="iPTMnet" id="Q7TNE1"/>
<dbReference type="PhosphoSitePlus" id="Q7TNE1"/>
<dbReference type="SwissPalm" id="Q7TNE1"/>
<dbReference type="jPOST" id="Q7TNE1"/>
<dbReference type="PaxDb" id="10090-ENSMUSP00000070759"/>
<dbReference type="ProteomicsDB" id="254780"/>
<dbReference type="Antibodypedia" id="49926">
    <property type="antibodies" value="127 antibodies from 19 providers"/>
</dbReference>
<dbReference type="DNASU" id="192136"/>
<dbReference type="Ensembl" id="ENSMUST00000068545.6">
    <property type="protein sequence ID" value="ENSMUSP00000070759.5"/>
    <property type="gene ID" value="ENSMUSG00000055137.8"/>
</dbReference>
<dbReference type="GeneID" id="192136"/>
<dbReference type="KEGG" id="mmu:192136"/>
<dbReference type="UCSC" id="uc007pnx.3">
    <property type="organism name" value="mouse"/>
</dbReference>
<dbReference type="AGR" id="MGI:1923221"/>
<dbReference type="CTD" id="79783"/>
<dbReference type="MGI" id="MGI:1923221">
    <property type="gene designation" value="Sugct"/>
</dbReference>
<dbReference type="VEuPathDB" id="HostDB:ENSMUSG00000055137"/>
<dbReference type="eggNOG" id="KOG3957">
    <property type="taxonomic scope" value="Eukaryota"/>
</dbReference>
<dbReference type="GeneTree" id="ENSGT00940000157866"/>
<dbReference type="HOGENOM" id="CLU_033975_2_1_1"/>
<dbReference type="InParanoid" id="Q7TNE1"/>
<dbReference type="OMA" id="IIAGPYC"/>
<dbReference type="OrthoDB" id="5863171at2759"/>
<dbReference type="PhylomeDB" id="Q7TNE1"/>
<dbReference type="TreeFam" id="TF314188"/>
<dbReference type="BioGRID-ORCS" id="192136">
    <property type="hits" value="3 hits in 78 CRISPR screens"/>
</dbReference>
<dbReference type="ChiTaRS" id="Sugct">
    <property type="organism name" value="mouse"/>
</dbReference>
<dbReference type="PRO" id="PR:Q7TNE1"/>
<dbReference type="Proteomes" id="UP000000589">
    <property type="component" value="Chromosome 13"/>
</dbReference>
<dbReference type="RNAct" id="Q7TNE1">
    <property type="molecule type" value="protein"/>
</dbReference>
<dbReference type="Bgee" id="ENSMUSG00000055137">
    <property type="expression patterns" value="Expressed in right kidney and 110 other cell types or tissues"/>
</dbReference>
<dbReference type="ExpressionAtlas" id="Q7TNE1">
    <property type="expression patterns" value="baseline and differential"/>
</dbReference>
<dbReference type="GO" id="GO:0005739">
    <property type="term" value="C:mitochondrion"/>
    <property type="evidence" value="ECO:0007005"/>
    <property type="project" value="MGI"/>
</dbReference>
<dbReference type="GO" id="GO:0047369">
    <property type="term" value="F:succinate-hydroxymethylglutarate CoA-transferase activity"/>
    <property type="evidence" value="ECO:0000250"/>
    <property type="project" value="UniProtKB"/>
</dbReference>
<dbReference type="FunFam" id="3.40.50.10540:FF:000005">
    <property type="entry name" value="succinate--hydroxymethylglutarate CoA-transferase isoform X1"/>
    <property type="match status" value="1"/>
</dbReference>
<dbReference type="FunFam" id="3.30.1540.10:FF:000005">
    <property type="entry name" value="succinate--hydroxymethylglutarate CoA-transferase isoform X4"/>
    <property type="match status" value="1"/>
</dbReference>
<dbReference type="Gene3D" id="3.40.50.10540">
    <property type="entry name" value="Crotonobetainyl-coa:carnitine coa-transferase, domain 1"/>
    <property type="match status" value="1"/>
</dbReference>
<dbReference type="Gene3D" id="3.30.1540.10">
    <property type="entry name" value="formyl-coa transferase, domain 3"/>
    <property type="match status" value="1"/>
</dbReference>
<dbReference type="InterPro" id="IPR050483">
    <property type="entry name" value="CoA-transferase_III_domain"/>
</dbReference>
<dbReference type="InterPro" id="IPR003673">
    <property type="entry name" value="CoA-Trfase_fam_III"/>
</dbReference>
<dbReference type="InterPro" id="IPR044855">
    <property type="entry name" value="CoA-Trfase_III_dom3_sf"/>
</dbReference>
<dbReference type="InterPro" id="IPR023606">
    <property type="entry name" value="CoA-Trfase_III_dom_1_sf"/>
</dbReference>
<dbReference type="PANTHER" id="PTHR48207">
    <property type="entry name" value="SUCCINATE--HYDROXYMETHYLGLUTARATE COA-TRANSFERASE"/>
    <property type="match status" value="1"/>
</dbReference>
<dbReference type="PANTHER" id="PTHR48207:SF3">
    <property type="entry name" value="SUCCINATE--HYDROXYMETHYLGLUTARATE COA-TRANSFERASE"/>
    <property type="match status" value="1"/>
</dbReference>
<dbReference type="Pfam" id="PF02515">
    <property type="entry name" value="CoA_transf_3"/>
    <property type="match status" value="1"/>
</dbReference>
<dbReference type="SUPFAM" id="SSF89796">
    <property type="entry name" value="CoA-transferase family III (CaiB/BaiF)"/>
    <property type="match status" value="1"/>
</dbReference>
<accession>Q7TNE1</accession>
<accession>G3X9F8</accession>